<proteinExistence type="evidence at protein level"/>
<evidence type="ECO:0000250" key="1">
    <source>
        <dbReference type="UniProtKB" id="Q9NZW5"/>
    </source>
</evidence>
<evidence type="ECO:0000255" key="2">
    <source>
        <dbReference type="PROSITE-ProRule" id="PRU00100"/>
    </source>
</evidence>
<evidence type="ECO:0000255" key="3">
    <source>
        <dbReference type="PROSITE-ProRule" id="PRU00143"/>
    </source>
</evidence>
<evidence type="ECO:0000255" key="4">
    <source>
        <dbReference type="PROSITE-ProRule" id="PRU00192"/>
    </source>
</evidence>
<evidence type="ECO:0000255" key="5">
    <source>
        <dbReference type="PROSITE-ProRule" id="PRU00365"/>
    </source>
</evidence>
<evidence type="ECO:0000269" key="6">
    <source>
    </source>
</evidence>
<evidence type="ECO:0000303" key="7">
    <source>
    </source>
</evidence>
<evidence type="ECO:0000303" key="8">
    <source ref="2"/>
</evidence>
<evidence type="ECO:0000305" key="9"/>
<evidence type="ECO:0000312" key="10">
    <source>
        <dbReference type="MGI" id="MGI:1927340"/>
    </source>
</evidence>
<protein>
    <recommendedName>
        <fullName evidence="9">Protein PALS2</fullName>
    </recommendedName>
    <alternativeName>
        <fullName>Dlgh4 protein</fullName>
    </alternativeName>
    <alternativeName>
        <fullName>MAGUK p55 subfamily member 6</fullName>
    </alternativeName>
    <alternativeName>
        <fullName>P55T protein</fullName>
    </alternativeName>
    <alternativeName>
        <fullName evidence="7">Protein associated with Lin-7 2</fullName>
    </alternativeName>
</protein>
<comment type="subunit">
    <text evidence="6">Interacts with CADM1. Interacts with the LIN7 proteins.</text>
</comment>
<comment type="interaction">
    <interactant intactId="EBI-771456">
        <id>Q9JLB0</id>
    </interactant>
    <interactant intactId="EBI-643339">
        <id>O70318</id>
        <label>Epb41l2</label>
    </interactant>
    <organismsDiffer>false</organismsDiffer>
    <experiments>3</experiments>
</comment>
<comment type="subcellular location">
    <subcellularLocation>
        <location>Membrane</location>
        <topology>Peripheral membrane protein</topology>
    </subcellularLocation>
</comment>
<comment type="alternative products">
    <event type="alternative splicing"/>
    <isoform>
        <id>Q9JLB0-1</id>
        <name>Beta</name>
        <sequence type="displayed"/>
    </isoform>
    <isoform>
        <id>Q9JLB0-2</id>
        <name>Alpha</name>
        <sequence type="described" ref="VSP_003161"/>
    </isoform>
</comment>
<comment type="similarity">
    <text evidence="9">Belongs to the MAGUK family.</text>
</comment>
<gene>
    <name evidence="7 10" type="primary">Pals2</name>
    <name type="synonym">Dlgh4</name>
    <name evidence="10" type="synonym">Mpp6</name>
</gene>
<reference key="1">
    <citation type="journal article" date="2000" name="J. Biol. Chem.">
        <title>Molecular cloning and characterization of Pals, proteins associated with mLin-7.</title>
        <authorList>
            <person name="Kamberov E."/>
            <person name="Makarova O."/>
            <person name="Roh M."/>
            <person name="Liu A."/>
            <person name="Karnak D."/>
            <person name="Straight S."/>
            <person name="Margolis B."/>
        </authorList>
    </citation>
    <scope>NUCLEOTIDE SEQUENCE [MRNA] (ISOFORMS ALPHA AND BETA)</scope>
</reference>
<reference key="2">
    <citation type="submission" date="1999-06" db="EMBL/GenBank/DDBJ databases">
        <authorList>
            <person name="Lin L."/>
            <person name="Chishti A.H."/>
        </authorList>
    </citation>
    <scope>NUCLEOTIDE SEQUENCE [MRNA] (ISOFORM ALPHA)</scope>
</reference>
<reference key="3">
    <citation type="journal article" date="2003" name="J. Biol. Chem.">
        <title>Implications of nectin-like molecule-2/IGSF4/RA175/SgIGSF/TSLC1/SynCAM1 in cell-cell adhesion and transmembrane protein localization in epithelial cells.</title>
        <authorList>
            <person name="Shingai T."/>
            <person name="Ikeda W."/>
            <person name="Kakunaga S."/>
            <person name="Morimoto K."/>
            <person name="Takekuni K."/>
            <person name="Itoh S."/>
            <person name="Satoh K."/>
            <person name="Takeuchi M."/>
            <person name="Imai T."/>
            <person name="Monden M."/>
            <person name="Takai Y."/>
        </authorList>
    </citation>
    <scope>INTERACTION WITH CADM1</scope>
</reference>
<reference key="4">
    <citation type="journal article" date="2010" name="Cell">
        <title>A tissue-specific atlas of mouse protein phosphorylation and expression.</title>
        <authorList>
            <person name="Huttlin E.L."/>
            <person name="Jedrychowski M.P."/>
            <person name="Elias J.E."/>
            <person name="Goswami T."/>
            <person name="Rad R."/>
            <person name="Beausoleil S.A."/>
            <person name="Villen J."/>
            <person name="Haas W."/>
            <person name="Sowa M.E."/>
            <person name="Gygi S.P."/>
        </authorList>
    </citation>
    <scope>IDENTIFICATION BY MASS SPECTROMETRY [LARGE SCALE ANALYSIS]</scope>
    <source>
        <tissue>Brain</tissue>
        <tissue>Brown adipose tissue</tissue>
        <tissue>Heart</tissue>
        <tissue>Kidney</tissue>
        <tissue>Liver</tissue>
        <tissue>Spleen</tissue>
        <tissue>Testis</tissue>
    </source>
</reference>
<dbReference type="EMBL" id="AF199009">
    <property type="protein sequence ID" value="AAF63790.1"/>
    <property type="molecule type" value="mRNA"/>
</dbReference>
<dbReference type="EMBL" id="AF199010">
    <property type="protein sequence ID" value="AAF63791.1"/>
    <property type="molecule type" value="mRNA"/>
</dbReference>
<dbReference type="EMBL" id="AF161181">
    <property type="protein sequence ID" value="AAD45009.1"/>
    <property type="molecule type" value="mRNA"/>
</dbReference>
<dbReference type="CCDS" id="CCDS20128.1">
    <molecule id="Q9JLB0-2"/>
</dbReference>
<dbReference type="CCDS" id="CCDS51770.1">
    <molecule id="Q9JLB0-1"/>
</dbReference>
<dbReference type="RefSeq" id="NP_001158205.1">
    <molecule id="Q9JLB0-1"/>
    <property type="nucleotide sequence ID" value="NM_001164733.2"/>
</dbReference>
<dbReference type="RefSeq" id="NP_001158206.1">
    <molecule id="Q9JLB0-1"/>
    <property type="nucleotide sequence ID" value="NM_001164734.2"/>
</dbReference>
<dbReference type="RefSeq" id="NP_001348176.1">
    <molecule id="Q9JLB0-2"/>
    <property type="nucleotide sequence ID" value="NM_001361247.2"/>
</dbReference>
<dbReference type="RefSeq" id="NP_001348177.1">
    <molecule id="Q9JLB0-1"/>
    <property type="nucleotide sequence ID" value="NM_001361248.2"/>
</dbReference>
<dbReference type="RefSeq" id="NP_001398281.1">
    <molecule id="Q9JLB0-1"/>
    <property type="nucleotide sequence ID" value="NM_001411352.1"/>
</dbReference>
<dbReference type="RefSeq" id="NP_001398282.1">
    <molecule id="Q9JLB0-1"/>
    <property type="nucleotide sequence ID" value="NM_001411353.1"/>
</dbReference>
<dbReference type="RefSeq" id="NP_001398285.1">
    <molecule id="Q9JLB0-2"/>
    <property type="nucleotide sequence ID" value="NM_001411356.1"/>
</dbReference>
<dbReference type="RefSeq" id="NP_001398287.1">
    <molecule id="Q9JLB0-2"/>
    <property type="nucleotide sequence ID" value="NM_001411358.1"/>
</dbReference>
<dbReference type="RefSeq" id="NP_001398288.1">
    <molecule id="Q9JLB0-2"/>
    <property type="nucleotide sequence ID" value="NM_001411359.1"/>
</dbReference>
<dbReference type="RefSeq" id="NP_001398289.1">
    <molecule id="Q9JLB0-2"/>
    <property type="nucleotide sequence ID" value="NM_001411360.1"/>
</dbReference>
<dbReference type="RefSeq" id="NP_064323.2">
    <molecule id="Q9JLB0-2"/>
    <property type="nucleotide sequence ID" value="NM_019939.3"/>
</dbReference>
<dbReference type="RefSeq" id="XP_036008133.1">
    <molecule id="Q9JLB0-1"/>
    <property type="nucleotide sequence ID" value="XM_036152240.1"/>
</dbReference>
<dbReference type="SMR" id="Q9JLB0"/>
<dbReference type="BioGRID" id="208035">
    <property type="interactions" value="24"/>
</dbReference>
<dbReference type="FunCoup" id="Q9JLB0">
    <property type="interactions" value="260"/>
</dbReference>
<dbReference type="IntAct" id="Q9JLB0">
    <property type="interactions" value="8"/>
</dbReference>
<dbReference type="MINT" id="Q9JLB0"/>
<dbReference type="STRING" id="10090.ENSMUSP00000125880"/>
<dbReference type="GlyGen" id="Q9JLB0">
    <property type="glycosylation" value="1 site, 1 O-linked glycan (1 site)"/>
</dbReference>
<dbReference type="iPTMnet" id="Q9JLB0"/>
<dbReference type="PhosphoSitePlus" id="Q9JLB0"/>
<dbReference type="SwissPalm" id="Q9JLB0"/>
<dbReference type="jPOST" id="Q9JLB0"/>
<dbReference type="PaxDb" id="10090-ENSMUSP00000125880"/>
<dbReference type="ProteomicsDB" id="291490">
    <molecule id="Q9JLB0-1"/>
</dbReference>
<dbReference type="ProteomicsDB" id="291491">
    <molecule id="Q9JLB0-2"/>
</dbReference>
<dbReference type="Pumba" id="Q9JLB0"/>
<dbReference type="Antibodypedia" id="12204">
    <property type="antibodies" value="246 antibodies from 34 providers"/>
</dbReference>
<dbReference type="DNASU" id="56524"/>
<dbReference type="Ensembl" id="ENSMUST00000036225.15">
    <molecule id="Q9JLB0-1"/>
    <property type="protein sequence ID" value="ENSMUSP00000038772.9"/>
    <property type="gene ID" value="ENSMUSG00000038388.15"/>
</dbReference>
<dbReference type="Ensembl" id="ENSMUST00000036236.15">
    <molecule id="Q9JLB0-2"/>
    <property type="protein sequence ID" value="ENSMUSP00000039314.9"/>
    <property type="gene ID" value="ENSMUSG00000038388.15"/>
</dbReference>
<dbReference type="Ensembl" id="ENSMUST00000166318.8">
    <molecule id="Q9JLB0-1"/>
    <property type="protein sequence ID" value="ENSMUSP00000125880.2"/>
    <property type="gene ID" value="ENSMUSG00000038388.15"/>
</dbReference>
<dbReference type="Ensembl" id="ENSMUST00000204545.3">
    <molecule id="Q9JLB0-2"/>
    <property type="protein sequence ID" value="ENSMUSP00000144737.2"/>
    <property type="gene ID" value="ENSMUSG00000038388.15"/>
</dbReference>
<dbReference type="GeneID" id="56524"/>
<dbReference type="KEGG" id="mmu:56524"/>
<dbReference type="UCSC" id="uc009bwv.2">
    <molecule id="Q9JLB0-1"/>
    <property type="organism name" value="mouse"/>
</dbReference>
<dbReference type="AGR" id="MGI:1927340"/>
<dbReference type="CTD" id="51678"/>
<dbReference type="MGI" id="MGI:1927340">
    <property type="gene designation" value="Pals2"/>
</dbReference>
<dbReference type="VEuPathDB" id="HostDB:ENSMUSG00000038388"/>
<dbReference type="eggNOG" id="KOG0609">
    <property type="taxonomic scope" value="Eukaryota"/>
</dbReference>
<dbReference type="GeneTree" id="ENSGT00940000158500"/>
<dbReference type="HOGENOM" id="CLU_001715_5_1_1"/>
<dbReference type="InParanoid" id="Q9JLB0"/>
<dbReference type="OMA" id="NPTTPHK"/>
<dbReference type="OrthoDB" id="65789at2759"/>
<dbReference type="PhylomeDB" id="Q9JLB0"/>
<dbReference type="TreeFam" id="TF314263"/>
<dbReference type="BioGRID-ORCS" id="56524">
    <property type="hits" value="3 hits in 80 CRISPR screens"/>
</dbReference>
<dbReference type="CD-CODE" id="CE726F99">
    <property type="entry name" value="Postsynaptic density"/>
</dbReference>
<dbReference type="ChiTaRS" id="Mpp6">
    <property type="organism name" value="mouse"/>
</dbReference>
<dbReference type="PRO" id="PR:Q9JLB0"/>
<dbReference type="Proteomes" id="UP000000589">
    <property type="component" value="Chromosome 6"/>
</dbReference>
<dbReference type="RNAct" id="Q9JLB0">
    <property type="molecule type" value="protein"/>
</dbReference>
<dbReference type="Bgee" id="ENSMUSG00000038388">
    <property type="expression patterns" value="Expressed in ureteric bud tip and 253 other cell types or tissues"/>
</dbReference>
<dbReference type="ExpressionAtlas" id="Q9JLB0">
    <property type="expression patterns" value="baseline and differential"/>
</dbReference>
<dbReference type="GO" id="GO:0016020">
    <property type="term" value="C:membrane"/>
    <property type="evidence" value="ECO:0000250"/>
    <property type="project" value="MGI"/>
</dbReference>
<dbReference type="GO" id="GO:0005886">
    <property type="term" value="C:plasma membrane"/>
    <property type="evidence" value="ECO:0000314"/>
    <property type="project" value="MGI"/>
</dbReference>
<dbReference type="GO" id="GO:0004385">
    <property type="term" value="F:guanylate kinase activity"/>
    <property type="evidence" value="ECO:0000250"/>
    <property type="project" value="MGI"/>
</dbReference>
<dbReference type="CDD" id="cd00071">
    <property type="entry name" value="GMPK"/>
    <property type="match status" value="1"/>
</dbReference>
<dbReference type="CDD" id="cd10832">
    <property type="entry name" value="PDZ_MPP6-MPP2-like"/>
    <property type="match status" value="1"/>
</dbReference>
<dbReference type="CDD" id="cd12038">
    <property type="entry name" value="SH3_MPP6"/>
    <property type="match status" value="1"/>
</dbReference>
<dbReference type="FunFam" id="2.30.30.40:FF:000069">
    <property type="entry name" value="MAGUK p55 subfamily member 6"/>
    <property type="match status" value="1"/>
</dbReference>
<dbReference type="FunFam" id="2.30.42.10:FF:000047">
    <property type="entry name" value="MAGUK p55 subfamily member 6"/>
    <property type="match status" value="1"/>
</dbReference>
<dbReference type="FunFam" id="3.40.50.300:FF:000146">
    <property type="entry name" value="MAGUK p55 subfamily member 6 isoform X1"/>
    <property type="match status" value="1"/>
</dbReference>
<dbReference type="Gene3D" id="2.30.42.10">
    <property type="match status" value="1"/>
</dbReference>
<dbReference type="Gene3D" id="1.10.287.650">
    <property type="entry name" value="L27 domain"/>
    <property type="match status" value="1"/>
</dbReference>
<dbReference type="Gene3D" id="3.40.50.300">
    <property type="entry name" value="P-loop containing nucleotide triphosphate hydrolases"/>
    <property type="match status" value="1"/>
</dbReference>
<dbReference type="Gene3D" id="2.30.30.40">
    <property type="entry name" value="SH3 Domains"/>
    <property type="match status" value="1"/>
</dbReference>
<dbReference type="InterPro" id="IPR008145">
    <property type="entry name" value="GK/Ca_channel_bsu"/>
</dbReference>
<dbReference type="InterPro" id="IPR008144">
    <property type="entry name" value="Guanylate_kin-like_dom"/>
</dbReference>
<dbReference type="InterPro" id="IPR020590">
    <property type="entry name" value="Guanylate_kinase_CS"/>
</dbReference>
<dbReference type="InterPro" id="IPR014775">
    <property type="entry name" value="L27_C"/>
</dbReference>
<dbReference type="InterPro" id="IPR004172">
    <property type="entry name" value="L27_dom"/>
</dbReference>
<dbReference type="InterPro" id="IPR036892">
    <property type="entry name" value="L27_dom_sf"/>
</dbReference>
<dbReference type="InterPro" id="IPR050716">
    <property type="entry name" value="MAGUK"/>
</dbReference>
<dbReference type="InterPro" id="IPR035603">
    <property type="entry name" value="MPP6_SH3"/>
</dbReference>
<dbReference type="InterPro" id="IPR027417">
    <property type="entry name" value="P-loop_NTPase"/>
</dbReference>
<dbReference type="InterPro" id="IPR001478">
    <property type="entry name" value="PDZ"/>
</dbReference>
<dbReference type="InterPro" id="IPR036034">
    <property type="entry name" value="PDZ_sf"/>
</dbReference>
<dbReference type="InterPro" id="IPR036028">
    <property type="entry name" value="SH3-like_dom_sf"/>
</dbReference>
<dbReference type="InterPro" id="IPR001452">
    <property type="entry name" value="SH3_domain"/>
</dbReference>
<dbReference type="PANTHER" id="PTHR23122">
    <property type="entry name" value="MEMBRANE-ASSOCIATED GUANYLATE KINASE MAGUK"/>
    <property type="match status" value="1"/>
</dbReference>
<dbReference type="Pfam" id="PF00625">
    <property type="entry name" value="Guanylate_kin"/>
    <property type="match status" value="1"/>
</dbReference>
<dbReference type="Pfam" id="PF02828">
    <property type="entry name" value="L27"/>
    <property type="match status" value="2"/>
</dbReference>
<dbReference type="Pfam" id="PF00595">
    <property type="entry name" value="PDZ"/>
    <property type="match status" value="1"/>
</dbReference>
<dbReference type="Pfam" id="PF07653">
    <property type="entry name" value="SH3_2"/>
    <property type="match status" value="1"/>
</dbReference>
<dbReference type="SMART" id="SM00072">
    <property type="entry name" value="GuKc"/>
    <property type="match status" value="1"/>
</dbReference>
<dbReference type="SMART" id="SM00569">
    <property type="entry name" value="L27"/>
    <property type="match status" value="2"/>
</dbReference>
<dbReference type="SMART" id="SM00228">
    <property type="entry name" value="PDZ"/>
    <property type="match status" value="1"/>
</dbReference>
<dbReference type="SMART" id="SM00326">
    <property type="entry name" value="SH3"/>
    <property type="match status" value="1"/>
</dbReference>
<dbReference type="SUPFAM" id="SSF101288">
    <property type="entry name" value="L27 domain"/>
    <property type="match status" value="1"/>
</dbReference>
<dbReference type="SUPFAM" id="SSF52540">
    <property type="entry name" value="P-loop containing nucleoside triphosphate hydrolases"/>
    <property type="match status" value="1"/>
</dbReference>
<dbReference type="SUPFAM" id="SSF50156">
    <property type="entry name" value="PDZ domain-like"/>
    <property type="match status" value="1"/>
</dbReference>
<dbReference type="SUPFAM" id="SSF50044">
    <property type="entry name" value="SH3-domain"/>
    <property type="match status" value="1"/>
</dbReference>
<dbReference type="PROSITE" id="PS00856">
    <property type="entry name" value="GUANYLATE_KINASE_1"/>
    <property type="match status" value="1"/>
</dbReference>
<dbReference type="PROSITE" id="PS50052">
    <property type="entry name" value="GUANYLATE_KINASE_2"/>
    <property type="match status" value="1"/>
</dbReference>
<dbReference type="PROSITE" id="PS51022">
    <property type="entry name" value="L27"/>
    <property type="match status" value="2"/>
</dbReference>
<dbReference type="PROSITE" id="PS50106">
    <property type="entry name" value="PDZ"/>
    <property type="match status" value="1"/>
</dbReference>
<dbReference type="PROSITE" id="PS50002">
    <property type="entry name" value="SH3"/>
    <property type="match status" value="1"/>
</dbReference>
<name>PALS2_MOUSE</name>
<sequence length="553" mass="62631">MQQVLENLTELPSSTGAEEIDLIFLKGIMENPIVKSLAKAHERLEDSKLEAVSDNNLELVNEILEDITPLISVDENVAELVGILKEPHFQSLLEAHDIVASKCYDSPPSSPEMNIPSLNNQLPVDAIRILGIHKKAGEPLGVTFRVENNDLVIARILHGGMIDRQGLLHVGDIIKEVNGHEVGNNPKELQELLKNISGSVTLKILPSYRDTITPQQSYVNMERHPAHVRQVFVKCHFDYNPFNDNLIPCKEAGLKFSKGEILQIVNREDPNWWQASHVKEGGSAGLIPSQFLEEKRKAFVRRDWDNSGPFCGTISNKKKKKMMYLTTRNAEFDRHEIQIYEEVAKMPPFQRKTLVLIGAQGVGRRSLKNRFIVLNPARFGTTVPFTSRKPREDEKDGQAYKFVSRSEMEADIKAGKYLEHGEYEGNLYGTKIDSILEVVQTGRTCILDVNPQALKVLRTSEFMPYVVFIAAPELETLRAMHKAVVDAGITTKLLTDSDLKKTVDESARIQRAYNHYFDLIIVNDNLDKAFEKLQTAIEKLRMEPQWVPISWVY</sequence>
<accession>Q9JLB0</accession>
<accession>Q9JLB1</accession>
<accession>Q9WV37</accession>
<organism>
    <name type="scientific">Mus musculus</name>
    <name type="common">Mouse</name>
    <dbReference type="NCBI Taxonomy" id="10090"/>
    <lineage>
        <taxon>Eukaryota</taxon>
        <taxon>Metazoa</taxon>
        <taxon>Chordata</taxon>
        <taxon>Craniata</taxon>
        <taxon>Vertebrata</taxon>
        <taxon>Euteleostomi</taxon>
        <taxon>Mammalia</taxon>
        <taxon>Eutheria</taxon>
        <taxon>Euarchontoglires</taxon>
        <taxon>Glires</taxon>
        <taxon>Rodentia</taxon>
        <taxon>Myomorpha</taxon>
        <taxon>Muroidea</taxon>
        <taxon>Muridae</taxon>
        <taxon>Murinae</taxon>
        <taxon>Mus</taxon>
        <taxon>Mus</taxon>
    </lineage>
</organism>
<keyword id="KW-0025">Alternative splicing</keyword>
<keyword id="KW-0472">Membrane</keyword>
<keyword id="KW-0597">Phosphoprotein</keyword>
<keyword id="KW-1185">Reference proteome</keyword>
<keyword id="KW-0677">Repeat</keyword>
<keyword id="KW-0728">SH3 domain</keyword>
<feature type="chain" id="PRO_0000094585" description="Protein PALS2">
    <location>
        <begin position="1"/>
        <end position="553"/>
    </location>
</feature>
<feature type="domain" description="L27 1" evidence="5">
    <location>
        <begin position="1"/>
        <end position="48"/>
    </location>
</feature>
<feature type="domain" description="L27 2" evidence="5">
    <location>
        <begin position="49"/>
        <end position="107"/>
    </location>
</feature>
<feature type="domain" description="PDZ" evidence="3">
    <location>
        <begin position="129"/>
        <end position="208"/>
    </location>
</feature>
<feature type="domain" description="SH3" evidence="4">
    <location>
        <begin position="228"/>
        <end position="297"/>
    </location>
</feature>
<feature type="domain" description="Guanylate kinase-like" evidence="2">
    <location>
        <begin position="351"/>
        <end position="538"/>
    </location>
</feature>
<feature type="modified residue" description="Phosphotyrosine" evidence="1">
    <location>
        <position position="513"/>
    </location>
</feature>
<feature type="splice variant" id="VSP_003161" description="In isoform Alpha." evidence="7 8">
    <location>
        <begin position="217"/>
        <end position="230"/>
    </location>
</feature>
<feature type="sequence conflict" description="In Ref. 2; AAD45009." evidence="9" ref="2">
    <original>DE</original>
    <variation>EQ</variation>
    <location>
        <begin position="393"/>
        <end position="394"/>
    </location>
</feature>